<reference key="1">
    <citation type="journal article" date="1988" name="J. Mol. Biol.">
        <title>Structure and organization of Marchantia polymorpha chloroplast genome. III. Gene organization of the large single copy region from rbcL to trnI(CAU).</title>
        <authorList>
            <person name="Fukuzawa H."/>
            <person name="Kohchi T."/>
            <person name="Sano T."/>
            <person name="Shirai H."/>
            <person name="Umesono K."/>
            <person name="Inokuchi H."/>
            <person name="Ozeki H."/>
            <person name="Ohyama K."/>
        </authorList>
    </citation>
    <scope>NUCLEOTIDE SEQUENCE [GENOMIC DNA]</scope>
</reference>
<reference key="2">
    <citation type="journal article" date="1986" name="Nature">
        <title>Chloroplast gene organization deduced from complete sequence of liverwort Marchantia polymorpha chloroplast DNA.</title>
        <authorList>
            <person name="Ohyama K."/>
            <person name="Fukuzawa H."/>
            <person name="Kohchi T."/>
            <person name="Shirai H."/>
            <person name="Sano T."/>
            <person name="Sano S."/>
            <person name="Umesono K."/>
            <person name="Shiki Y."/>
            <person name="Takeuchi M."/>
            <person name="Chang Z."/>
            <person name="Aota S."/>
            <person name="Inokuchi H."/>
            <person name="Ozeki H."/>
        </authorList>
    </citation>
    <scope>NUCLEOTIDE SEQUENCE [LARGE SCALE GENOMIC DNA]</scope>
</reference>
<keyword id="KW-0150">Chloroplast</keyword>
<keyword id="KW-0934">Plastid</keyword>
<keyword id="KW-0687">Ribonucleoprotein</keyword>
<keyword id="KW-0689">Ribosomal protein</keyword>
<keyword id="KW-0694">RNA-binding</keyword>
<keyword id="KW-0699">rRNA-binding</keyword>
<comment type="function">
    <text evidence="1">Protein S19 forms a complex with S13 that binds strongly to the 16S ribosomal RNA.</text>
</comment>
<comment type="subcellular location">
    <subcellularLocation>
        <location>Plastid</location>
        <location>Chloroplast</location>
    </subcellularLocation>
</comment>
<comment type="similarity">
    <text evidence="2">Belongs to the universal ribosomal protein uS19 family.</text>
</comment>
<gene>
    <name type="primary">rps19</name>
</gene>
<proteinExistence type="inferred from homology"/>
<dbReference type="EMBL" id="X04465">
    <property type="protein sequence ID" value="CAA28126.1"/>
    <property type="molecule type" value="Genomic_DNA"/>
</dbReference>
<dbReference type="PIR" id="A02745">
    <property type="entry name" value="R3LV19"/>
</dbReference>
<dbReference type="RefSeq" id="NP_039340.1">
    <property type="nucleotide sequence ID" value="NC_001319.1"/>
</dbReference>
<dbReference type="RefSeq" id="YP_009646853.1">
    <property type="nucleotide sequence ID" value="NC_042505.1"/>
</dbReference>
<dbReference type="SMR" id="P06377"/>
<dbReference type="GeneID" id="2702573"/>
<dbReference type="GeneID" id="40386723"/>
<dbReference type="GO" id="GO:0009507">
    <property type="term" value="C:chloroplast"/>
    <property type="evidence" value="ECO:0007669"/>
    <property type="project" value="UniProtKB-SubCell"/>
</dbReference>
<dbReference type="GO" id="GO:0015935">
    <property type="term" value="C:small ribosomal subunit"/>
    <property type="evidence" value="ECO:0007669"/>
    <property type="project" value="InterPro"/>
</dbReference>
<dbReference type="GO" id="GO:0019843">
    <property type="term" value="F:rRNA binding"/>
    <property type="evidence" value="ECO:0007669"/>
    <property type="project" value="UniProtKB-UniRule"/>
</dbReference>
<dbReference type="GO" id="GO:0003735">
    <property type="term" value="F:structural constituent of ribosome"/>
    <property type="evidence" value="ECO:0007669"/>
    <property type="project" value="InterPro"/>
</dbReference>
<dbReference type="GO" id="GO:0006412">
    <property type="term" value="P:translation"/>
    <property type="evidence" value="ECO:0007669"/>
    <property type="project" value="UniProtKB-UniRule"/>
</dbReference>
<dbReference type="FunFam" id="3.30.860.10:FF:000001">
    <property type="entry name" value="30S ribosomal protein S19"/>
    <property type="match status" value="1"/>
</dbReference>
<dbReference type="Gene3D" id="3.30.860.10">
    <property type="entry name" value="30s Ribosomal Protein S19, Chain A"/>
    <property type="match status" value="1"/>
</dbReference>
<dbReference type="HAMAP" id="MF_00531">
    <property type="entry name" value="Ribosomal_uS19"/>
    <property type="match status" value="1"/>
</dbReference>
<dbReference type="InterPro" id="IPR002222">
    <property type="entry name" value="Ribosomal_uS19"/>
</dbReference>
<dbReference type="InterPro" id="IPR005732">
    <property type="entry name" value="Ribosomal_uS19_bac-type"/>
</dbReference>
<dbReference type="InterPro" id="IPR020934">
    <property type="entry name" value="Ribosomal_uS19_CS"/>
</dbReference>
<dbReference type="InterPro" id="IPR023575">
    <property type="entry name" value="Ribosomal_uS19_SF"/>
</dbReference>
<dbReference type="NCBIfam" id="TIGR01050">
    <property type="entry name" value="rpsS_bact"/>
    <property type="match status" value="1"/>
</dbReference>
<dbReference type="PANTHER" id="PTHR11880">
    <property type="entry name" value="RIBOSOMAL PROTEIN S19P FAMILY MEMBER"/>
    <property type="match status" value="1"/>
</dbReference>
<dbReference type="PANTHER" id="PTHR11880:SF8">
    <property type="entry name" value="SMALL RIBOSOMAL SUBUNIT PROTEIN US19M"/>
    <property type="match status" value="1"/>
</dbReference>
<dbReference type="Pfam" id="PF00203">
    <property type="entry name" value="Ribosomal_S19"/>
    <property type="match status" value="1"/>
</dbReference>
<dbReference type="PIRSF" id="PIRSF002144">
    <property type="entry name" value="Ribosomal_S19"/>
    <property type="match status" value="1"/>
</dbReference>
<dbReference type="PRINTS" id="PR00975">
    <property type="entry name" value="RIBOSOMALS19"/>
</dbReference>
<dbReference type="SUPFAM" id="SSF54570">
    <property type="entry name" value="Ribosomal protein S19"/>
    <property type="match status" value="1"/>
</dbReference>
<dbReference type="PROSITE" id="PS00323">
    <property type="entry name" value="RIBOSOMAL_S19"/>
    <property type="match status" value="1"/>
</dbReference>
<evidence type="ECO:0000250" key="1"/>
<evidence type="ECO:0000305" key="2"/>
<protein>
    <recommendedName>
        <fullName evidence="2">Small ribosomal subunit protein uS19c</fullName>
    </recommendedName>
    <alternativeName>
        <fullName>30S ribosomal protein S19, chloroplastic</fullName>
    </alternativeName>
</protein>
<feature type="initiator methionine" description="Removed" evidence="1">
    <location>
        <position position="1"/>
    </location>
</feature>
<feature type="chain" id="PRO_0000129969" description="Small ribosomal subunit protein uS19c">
    <location>
        <begin position="2"/>
        <end position="92"/>
    </location>
</feature>
<organism>
    <name type="scientific">Marchantia polymorpha</name>
    <name type="common">Common liverwort</name>
    <name type="synonym">Marchantia aquatica</name>
    <dbReference type="NCBI Taxonomy" id="3197"/>
    <lineage>
        <taxon>Eukaryota</taxon>
        <taxon>Viridiplantae</taxon>
        <taxon>Streptophyta</taxon>
        <taxon>Embryophyta</taxon>
        <taxon>Marchantiophyta</taxon>
        <taxon>Marchantiopsida</taxon>
        <taxon>Marchantiidae</taxon>
        <taxon>Marchantiales</taxon>
        <taxon>Marchantiaceae</taxon>
        <taxon>Marchantia</taxon>
    </lineage>
</organism>
<accession>P06377</accession>
<name>RR19_MARPO</name>
<geneLocation type="chloroplast"/>
<sequence length="92" mass="10553">MTRSIKKGPFVADHLLKKIENLNLKKEKKIIITWSRASTIVPTMIGHTIAVHNGQEHLPIYITDRMVGHKLGEFAPTRTFRGHAKNDKKSRR</sequence>